<keyword id="KW-0134">Cell wall</keyword>
<keyword id="KW-0903">Direct protein sequencing</keyword>
<keyword id="KW-1185">Reference proteome</keyword>
<keyword id="KW-0964">Secreted</keyword>
<keyword id="KW-0732">Signal</keyword>
<gene>
    <name type="primary">yqgA</name>
    <name type="ordered locus">BSU25050</name>
</gene>
<comment type="subunit">
    <text>Found in a complex with F(1)F(0) ATP synthase and SpoIIIJ and YqjG.</text>
</comment>
<comment type="subcellular location">
    <subcellularLocation>
        <location evidence="1">Secreted</location>
        <location evidence="1">Cell wall</location>
    </subcellularLocation>
</comment>
<name>YQGA_BACSU</name>
<dbReference type="EMBL" id="D84432">
    <property type="protein sequence ID" value="BAA12504.1"/>
    <property type="molecule type" value="Genomic_DNA"/>
</dbReference>
<dbReference type="EMBL" id="AL009126">
    <property type="protein sequence ID" value="CAB14435.2"/>
    <property type="molecule type" value="Genomic_DNA"/>
</dbReference>
<dbReference type="PIR" id="E69955">
    <property type="entry name" value="E69955"/>
</dbReference>
<dbReference type="RefSeq" id="NP_390384.2">
    <property type="nucleotide sequence ID" value="NC_000964.3"/>
</dbReference>
<dbReference type="RefSeq" id="WP_009967754.1">
    <property type="nucleotide sequence ID" value="NZ_OZ025638.1"/>
</dbReference>
<dbReference type="FunCoup" id="P54484">
    <property type="interactions" value="7"/>
</dbReference>
<dbReference type="STRING" id="224308.BSU25050"/>
<dbReference type="jPOST" id="P54484"/>
<dbReference type="PaxDb" id="224308-BSU25050"/>
<dbReference type="EnsemblBacteria" id="CAB14435">
    <property type="protein sequence ID" value="CAB14435"/>
    <property type="gene ID" value="BSU_25050"/>
</dbReference>
<dbReference type="GeneID" id="86872946"/>
<dbReference type="GeneID" id="937963"/>
<dbReference type="KEGG" id="bsu:BSU25050"/>
<dbReference type="PATRIC" id="fig|224308.179.peg.2724"/>
<dbReference type="eggNOG" id="ENOG502ZSTF">
    <property type="taxonomic scope" value="Bacteria"/>
</dbReference>
<dbReference type="InParanoid" id="P54484"/>
<dbReference type="OrthoDB" id="2906259at2"/>
<dbReference type="BioCyc" id="BSUB:BSU25050-MONOMER"/>
<dbReference type="Proteomes" id="UP000001570">
    <property type="component" value="Chromosome"/>
</dbReference>
<dbReference type="GO" id="GO:0005576">
    <property type="term" value="C:extracellular region"/>
    <property type="evidence" value="ECO:0007669"/>
    <property type="project" value="UniProtKB-KW"/>
</dbReference>
<organism>
    <name type="scientific">Bacillus subtilis (strain 168)</name>
    <dbReference type="NCBI Taxonomy" id="224308"/>
    <lineage>
        <taxon>Bacteria</taxon>
        <taxon>Bacillati</taxon>
        <taxon>Bacillota</taxon>
        <taxon>Bacilli</taxon>
        <taxon>Bacillales</taxon>
        <taxon>Bacillaceae</taxon>
        <taxon>Bacillus</taxon>
    </lineage>
</organism>
<accession>P54484</accession>
<protein>
    <recommendedName>
        <fullName>Cell wall-binding protein YqgA</fullName>
    </recommendedName>
</protein>
<evidence type="ECO:0000269" key="1">
    <source>
    </source>
</evidence>
<evidence type="ECO:0000305" key="2"/>
<feature type="signal peptide" evidence="1">
    <location>
        <begin position="1"/>
        <end position="28"/>
    </location>
</feature>
<feature type="chain" id="PRO_0000049804" description="Cell wall-binding protein YqgA">
    <location>
        <begin position="29"/>
        <end position="142"/>
    </location>
</feature>
<feature type="sequence conflict" description="In Ref. 1; BAA12504." evidence="2" ref="1">
    <original>E</original>
    <variation>G</variation>
    <location>
        <position position="24"/>
    </location>
</feature>
<reference key="1">
    <citation type="journal article" date="1996" name="Microbiology">
        <title>Systematic sequencing of the 283 kb 210 degrees-232 degrees region of the Bacillus subtilis genome containing the skin element and many sporulation genes.</title>
        <authorList>
            <person name="Mizuno M."/>
            <person name="Masuda S."/>
            <person name="Takemaru K."/>
            <person name="Hosono S."/>
            <person name="Sato T."/>
            <person name="Takeuchi M."/>
            <person name="Kobayashi Y."/>
        </authorList>
    </citation>
    <scope>NUCLEOTIDE SEQUENCE [GENOMIC DNA]</scope>
    <source>
        <strain>168 / JH642</strain>
    </source>
</reference>
<reference key="2">
    <citation type="journal article" date="1997" name="Nature">
        <title>The complete genome sequence of the Gram-positive bacterium Bacillus subtilis.</title>
        <authorList>
            <person name="Kunst F."/>
            <person name="Ogasawara N."/>
            <person name="Moszer I."/>
            <person name="Albertini A.M."/>
            <person name="Alloni G."/>
            <person name="Azevedo V."/>
            <person name="Bertero M.G."/>
            <person name="Bessieres P."/>
            <person name="Bolotin A."/>
            <person name="Borchert S."/>
            <person name="Borriss R."/>
            <person name="Boursier L."/>
            <person name="Brans A."/>
            <person name="Braun M."/>
            <person name="Brignell S.C."/>
            <person name="Bron S."/>
            <person name="Brouillet S."/>
            <person name="Bruschi C.V."/>
            <person name="Caldwell B."/>
            <person name="Capuano V."/>
            <person name="Carter N.M."/>
            <person name="Choi S.-K."/>
            <person name="Codani J.-J."/>
            <person name="Connerton I.F."/>
            <person name="Cummings N.J."/>
            <person name="Daniel R.A."/>
            <person name="Denizot F."/>
            <person name="Devine K.M."/>
            <person name="Duesterhoeft A."/>
            <person name="Ehrlich S.D."/>
            <person name="Emmerson P.T."/>
            <person name="Entian K.-D."/>
            <person name="Errington J."/>
            <person name="Fabret C."/>
            <person name="Ferrari E."/>
            <person name="Foulger D."/>
            <person name="Fritz C."/>
            <person name="Fujita M."/>
            <person name="Fujita Y."/>
            <person name="Fuma S."/>
            <person name="Galizzi A."/>
            <person name="Galleron N."/>
            <person name="Ghim S.-Y."/>
            <person name="Glaser P."/>
            <person name="Goffeau A."/>
            <person name="Golightly E.J."/>
            <person name="Grandi G."/>
            <person name="Guiseppi G."/>
            <person name="Guy B.J."/>
            <person name="Haga K."/>
            <person name="Haiech J."/>
            <person name="Harwood C.R."/>
            <person name="Henaut A."/>
            <person name="Hilbert H."/>
            <person name="Holsappel S."/>
            <person name="Hosono S."/>
            <person name="Hullo M.-F."/>
            <person name="Itaya M."/>
            <person name="Jones L.-M."/>
            <person name="Joris B."/>
            <person name="Karamata D."/>
            <person name="Kasahara Y."/>
            <person name="Klaerr-Blanchard M."/>
            <person name="Klein C."/>
            <person name="Kobayashi Y."/>
            <person name="Koetter P."/>
            <person name="Koningstein G."/>
            <person name="Krogh S."/>
            <person name="Kumano M."/>
            <person name="Kurita K."/>
            <person name="Lapidus A."/>
            <person name="Lardinois S."/>
            <person name="Lauber J."/>
            <person name="Lazarevic V."/>
            <person name="Lee S.-M."/>
            <person name="Levine A."/>
            <person name="Liu H."/>
            <person name="Masuda S."/>
            <person name="Mauel C."/>
            <person name="Medigue C."/>
            <person name="Medina N."/>
            <person name="Mellado R.P."/>
            <person name="Mizuno M."/>
            <person name="Moestl D."/>
            <person name="Nakai S."/>
            <person name="Noback M."/>
            <person name="Noone D."/>
            <person name="O'Reilly M."/>
            <person name="Ogawa K."/>
            <person name="Ogiwara A."/>
            <person name="Oudega B."/>
            <person name="Park S.-H."/>
            <person name="Parro V."/>
            <person name="Pohl T.M."/>
            <person name="Portetelle D."/>
            <person name="Porwollik S."/>
            <person name="Prescott A.M."/>
            <person name="Presecan E."/>
            <person name="Pujic P."/>
            <person name="Purnelle B."/>
            <person name="Rapoport G."/>
            <person name="Rey M."/>
            <person name="Reynolds S."/>
            <person name="Rieger M."/>
            <person name="Rivolta C."/>
            <person name="Rocha E."/>
            <person name="Roche B."/>
            <person name="Rose M."/>
            <person name="Sadaie Y."/>
            <person name="Sato T."/>
            <person name="Scanlan E."/>
            <person name="Schleich S."/>
            <person name="Schroeter R."/>
            <person name="Scoffone F."/>
            <person name="Sekiguchi J."/>
            <person name="Sekowska A."/>
            <person name="Seror S.J."/>
            <person name="Serror P."/>
            <person name="Shin B.-S."/>
            <person name="Soldo B."/>
            <person name="Sorokin A."/>
            <person name="Tacconi E."/>
            <person name="Takagi T."/>
            <person name="Takahashi H."/>
            <person name="Takemaru K."/>
            <person name="Takeuchi M."/>
            <person name="Tamakoshi A."/>
            <person name="Tanaka T."/>
            <person name="Terpstra P."/>
            <person name="Tognoni A."/>
            <person name="Tosato V."/>
            <person name="Uchiyama S."/>
            <person name="Vandenbol M."/>
            <person name="Vannier F."/>
            <person name="Vassarotti A."/>
            <person name="Viari A."/>
            <person name="Wambutt R."/>
            <person name="Wedler E."/>
            <person name="Wedler H."/>
            <person name="Weitzenegger T."/>
            <person name="Winters P."/>
            <person name="Wipat A."/>
            <person name="Yamamoto H."/>
            <person name="Yamane K."/>
            <person name="Yasumoto K."/>
            <person name="Yata K."/>
            <person name="Yoshida K."/>
            <person name="Yoshikawa H.-F."/>
            <person name="Zumstein E."/>
            <person name="Yoshikawa H."/>
            <person name="Danchin A."/>
        </authorList>
    </citation>
    <scope>NUCLEOTIDE SEQUENCE [LARGE SCALE GENOMIC DNA]</scope>
    <source>
        <strain>168</strain>
    </source>
</reference>
<reference key="3">
    <citation type="journal article" date="2009" name="Microbiology">
        <title>From a consortium sequence to a unified sequence: the Bacillus subtilis 168 reference genome a decade later.</title>
        <authorList>
            <person name="Barbe V."/>
            <person name="Cruveiller S."/>
            <person name="Kunst F."/>
            <person name="Lenoble P."/>
            <person name="Meurice G."/>
            <person name="Sekowska A."/>
            <person name="Vallenet D."/>
            <person name="Wang T."/>
            <person name="Moszer I."/>
            <person name="Medigue C."/>
            <person name="Danchin A."/>
        </authorList>
    </citation>
    <scope>SEQUENCE REVISION TO 24</scope>
</reference>
<reference key="4">
    <citation type="journal article" date="2002" name="Proteomics">
        <title>Stabilization of cell wall proteins in Bacillus subtilis: a proteomic approach.</title>
        <authorList>
            <person name="Antelmann H."/>
            <person name="Yamamoto H."/>
            <person name="Sekiguchi J."/>
            <person name="Hecker M."/>
        </authorList>
    </citation>
    <scope>PROTEIN SEQUENCE OF N-TERMINUS</scope>
    <scope>IDENTIFICATION BY MASS SPECTROMETRY</scope>
    <scope>SUBCELLULAR LOCATION</scope>
    <source>
        <strain>168</strain>
    </source>
</reference>
<reference key="5">
    <citation type="journal article" date="2009" name="J. Bacteriol.">
        <title>Bacillus subtilis SpoIIIJ and YqjG function in membrane protein biogenesis.</title>
        <authorList>
            <person name="Saller M.J."/>
            <person name="Fusetti F."/>
            <person name="Driessen A.J."/>
        </authorList>
    </citation>
    <scope>IDENTIFICATION BY MASS SPECTROMETRY</scope>
    <scope>INTERACTION WITH SPOIIIJ AND YQJG</scope>
    <source>
        <strain>168</strain>
    </source>
</reference>
<sequence>MKQGKFSVFLILLLMLTLVVAPKEKAEAASSGWQPVSGISGCKIRVITDAYTYTKSATSIDAYAETNGKCGKLNYKSFGVSIVEGGDIGPQYSGYFSSRTPTKKFYFSKLPKPTGTPWAVGLSVYKGKAKGAAFVYINPQKR</sequence>
<proteinExistence type="evidence at protein level"/>